<comment type="function">
    <text evidence="1">Key enzyme in the regulation of glycerol uptake and metabolism. Catalyzes the phosphorylation of glycerol to yield sn-glycerol 3-phosphate.</text>
</comment>
<comment type="catalytic activity">
    <reaction evidence="1">
        <text>glycerol + ATP = sn-glycerol 3-phosphate + ADP + H(+)</text>
        <dbReference type="Rhea" id="RHEA:21644"/>
        <dbReference type="ChEBI" id="CHEBI:15378"/>
        <dbReference type="ChEBI" id="CHEBI:17754"/>
        <dbReference type="ChEBI" id="CHEBI:30616"/>
        <dbReference type="ChEBI" id="CHEBI:57597"/>
        <dbReference type="ChEBI" id="CHEBI:456216"/>
        <dbReference type="EC" id="2.7.1.30"/>
    </reaction>
</comment>
<comment type="activity regulation">
    <text evidence="1">Inhibited by fructose 1,6-bisphosphate (FBP).</text>
</comment>
<comment type="pathway">
    <text evidence="1">Polyol metabolism; glycerol degradation via glycerol kinase pathway; sn-glycerol 3-phosphate from glycerol: step 1/1.</text>
</comment>
<comment type="similarity">
    <text evidence="1">Belongs to the FGGY kinase family.</text>
</comment>
<dbReference type="EC" id="2.7.1.30" evidence="1"/>
<dbReference type="EMBL" id="CP000910">
    <property type="protein sequence ID" value="ABY23681.1"/>
    <property type="molecule type" value="Genomic_DNA"/>
</dbReference>
<dbReference type="RefSeq" id="WP_012245351.1">
    <property type="nucleotide sequence ID" value="NC_010168.1"/>
</dbReference>
<dbReference type="SMR" id="A9WS93"/>
<dbReference type="STRING" id="288705.RSal33209_1948"/>
<dbReference type="KEGG" id="rsa:RSal33209_1948"/>
<dbReference type="eggNOG" id="COG0554">
    <property type="taxonomic scope" value="Bacteria"/>
</dbReference>
<dbReference type="HOGENOM" id="CLU_009281_2_3_11"/>
<dbReference type="UniPathway" id="UPA00618">
    <property type="reaction ID" value="UER00672"/>
</dbReference>
<dbReference type="Proteomes" id="UP000002007">
    <property type="component" value="Chromosome"/>
</dbReference>
<dbReference type="GO" id="GO:0005829">
    <property type="term" value="C:cytosol"/>
    <property type="evidence" value="ECO:0007669"/>
    <property type="project" value="TreeGrafter"/>
</dbReference>
<dbReference type="GO" id="GO:0005524">
    <property type="term" value="F:ATP binding"/>
    <property type="evidence" value="ECO:0007669"/>
    <property type="project" value="UniProtKB-UniRule"/>
</dbReference>
<dbReference type="GO" id="GO:0004370">
    <property type="term" value="F:glycerol kinase activity"/>
    <property type="evidence" value="ECO:0000250"/>
    <property type="project" value="UniProtKB"/>
</dbReference>
<dbReference type="GO" id="GO:0019563">
    <property type="term" value="P:glycerol catabolic process"/>
    <property type="evidence" value="ECO:0007669"/>
    <property type="project" value="UniProtKB-UniRule"/>
</dbReference>
<dbReference type="GO" id="GO:0006071">
    <property type="term" value="P:glycerol metabolic process"/>
    <property type="evidence" value="ECO:0000250"/>
    <property type="project" value="UniProtKB"/>
</dbReference>
<dbReference type="GO" id="GO:0006072">
    <property type="term" value="P:glycerol-3-phosphate metabolic process"/>
    <property type="evidence" value="ECO:0007669"/>
    <property type="project" value="InterPro"/>
</dbReference>
<dbReference type="CDD" id="cd07769">
    <property type="entry name" value="ASKHA_NBD_FGGY_GK"/>
    <property type="match status" value="1"/>
</dbReference>
<dbReference type="FunFam" id="3.30.420.40:FF:000007">
    <property type="entry name" value="Glycerol kinase"/>
    <property type="match status" value="1"/>
</dbReference>
<dbReference type="FunFam" id="3.30.420.40:FF:000008">
    <property type="entry name" value="Glycerol kinase"/>
    <property type="match status" value="1"/>
</dbReference>
<dbReference type="Gene3D" id="3.30.420.40">
    <property type="match status" value="2"/>
</dbReference>
<dbReference type="HAMAP" id="MF_00186">
    <property type="entry name" value="Glycerol_kin"/>
    <property type="match status" value="1"/>
</dbReference>
<dbReference type="InterPro" id="IPR043129">
    <property type="entry name" value="ATPase_NBD"/>
</dbReference>
<dbReference type="InterPro" id="IPR000577">
    <property type="entry name" value="Carb_kinase_FGGY"/>
</dbReference>
<dbReference type="InterPro" id="IPR018483">
    <property type="entry name" value="Carb_kinase_FGGY_CS"/>
</dbReference>
<dbReference type="InterPro" id="IPR018485">
    <property type="entry name" value="FGGY_C"/>
</dbReference>
<dbReference type="InterPro" id="IPR018484">
    <property type="entry name" value="FGGY_N"/>
</dbReference>
<dbReference type="InterPro" id="IPR005999">
    <property type="entry name" value="Glycerol_kin"/>
</dbReference>
<dbReference type="NCBIfam" id="TIGR01311">
    <property type="entry name" value="glycerol_kin"/>
    <property type="match status" value="1"/>
</dbReference>
<dbReference type="NCBIfam" id="NF000756">
    <property type="entry name" value="PRK00047.1"/>
    <property type="match status" value="1"/>
</dbReference>
<dbReference type="PANTHER" id="PTHR10196:SF69">
    <property type="entry name" value="GLYCEROL KINASE"/>
    <property type="match status" value="1"/>
</dbReference>
<dbReference type="PANTHER" id="PTHR10196">
    <property type="entry name" value="SUGAR KINASE"/>
    <property type="match status" value="1"/>
</dbReference>
<dbReference type="Pfam" id="PF02782">
    <property type="entry name" value="FGGY_C"/>
    <property type="match status" value="1"/>
</dbReference>
<dbReference type="Pfam" id="PF00370">
    <property type="entry name" value="FGGY_N"/>
    <property type="match status" value="1"/>
</dbReference>
<dbReference type="PIRSF" id="PIRSF000538">
    <property type="entry name" value="GlpK"/>
    <property type="match status" value="1"/>
</dbReference>
<dbReference type="SUPFAM" id="SSF53067">
    <property type="entry name" value="Actin-like ATPase domain"/>
    <property type="match status" value="2"/>
</dbReference>
<dbReference type="PROSITE" id="PS00933">
    <property type="entry name" value="FGGY_KINASES_1"/>
    <property type="match status" value="1"/>
</dbReference>
<dbReference type="PROSITE" id="PS00445">
    <property type="entry name" value="FGGY_KINASES_2"/>
    <property type="match status" value="1"/>
</dbReference>
<gene>
    <name evidence="1" type="primary">glpK</name>
    <name type="ordered locus">RSal33209_1948</name>
</gene>
<proteinExistence type="inferred from homology"/>
<name>GLPK_RENSM</name>
<feature type="chain" id="PRO_1000077425" description="Glycerol kinase">
    <location>
        <begin position="1"/>
        <end position="504"/>
    </location>
</feature>
<feature type="binding site" evidence="1">
    <location>
        <position position="12"/>
    </location>
    <ligand>
        <name>ADP</name>
        <dbReference type="ChEBI" id="CHEBI:456216"/>
    </ligand>
</feature>
<feature type="binding site" evidence="1">
    <location>
        <position position="12"/>
    </location>
    <ligand>
        <name>ATP</name>
        <dbReference type="ChEBI" id="CHEBI:30616"/>
    </ligand>
</feature>
<feature type="binding site" evidence="1">
    <location>
        <position position="12"/>
    </location>
    <ligand>
        <name>sn-glycerol 3-phosphate</name>
        <dbReference type="ChEBI" id="CHEBI:57597"/>
    </ligand>
</feature>
<feature type="binding site" evidence="1">
    <location>
        <position position="13"/>
    </location>
    <ligand>
        <name>ATP</name>
        <dbReference type="ChEBI" id="CHEBI:30616"/>
    </ligand>
</feature>
<feature type="binding site" evidence="1">
    <location>
        <position position="14"/>
    </location>
    <ligand>
        <name>ATP</name>
        <dbReference type="ChEBI" id="CHEBI:30616"/>
    </ligand>
</feature>
<feature type="binding site" evidence="1">
    <location>
        <position position="16"/>
    </location>
    <ligand>
        <name>ADP</name>
        <dbReference type="ChEBI" id="CHEBI:456216"/>
    </ligand>
</feature>
<feature type="binding site" evidence="1">
    <location>
        <position position="82"/>
    </location>
    <ligand>
        <name>glycerol</name>
        <dbReference type="ChEBI" id="CHEBI:17754"/>
    </ligand>
</feature>
<feature type="binding site" evidence="1">
    <location>
        <position position="82"/>
    </location>
    <ligand>
        <name>sn-glycerol 3-phosphate</name>
        <dbReference type="ChEBI" id="CHEBI:57597"/>
    </ligand>
</feature>
<feature type="binding site" evidence="1">
    <location>
        <position position="83"/>
    </location>
    <ligand>
        <name>glycerol</name>
        <dbReference type="ChEBI" id="CHEBI:17754"/>
    </ligand>
</feature>
<feature type="binding site" evidence="1">
    <location>
        <position position="83"/>
    </location>
    <ligand>
        <name>sn-glycerol 3-phosphate</name>
        <dbReference type="ChEBI" id="CHEBI:57597"/>
    </ligand>
</feature>
<feature type="binding site" evidence="1">
    <location>
        <position position="134"/>
    </location>
    <ligand>
        <name>glycerol</name>
        <dbReference type="ChEBI" id="CHEBI:17754"/>
    </ligand>
</feature>
<feature type="binding site" evidence="1">
    <location>
        <position position="134"/>
    </location>
    <ligand>
        <name>sn-glycerol 3-phosphate</name>
        <dbReference type="ChEBI" id="CHEBI:57597"/>
    </ligand>
</feature>
<feature type="binding site" evidence="1">
    <location>
        <position position="246"/>
    </location>
    <ligand>
        <name>glycerol</name>
        <dbReference type="ChEBI" id="CHEBI:17754"/>
    </ligand>
</feature>
<feature type="binding site" evidence="1">
    <location>
        <position position="246"/>
    </location>
    <ligand>
        <name>sn-glycerol 3-phosphate</name>
        <dbReference type="ChEBI" id="CHEBI:57597"/>
    </ligand>
</feature>
<feature type="binding site" evidence="1">
    <location>
        <position position="247"/>
    </location>
    <ligand>
        <name>glycerol</name>
        <dbReference type="ChEBI" id="CHEBI:17754"/>
    </ligand>
</feature>
<feature type="binding site" evidence="1">
    <location>
        <position position="268"/>
    </location>
    <ligand>
        <name>ADP</name>
        <dbReference type="ChEBI" id="CHEBI:456216"/>
    </ligand>
</feature>
<feature type="binding site" evidence="1">
    <location>
        <position position="268"/>
    </location>
    <ligand>
        <name>ATP</name>
        <dbReference type="ChEBI" id="CHEBI:30616"/>
    </ligand>
</feature>
<feature type="binding site" evidence="1">
    <location>
        <position position="312"/>
    </location>
    <ligand>
        <name>ADP</name>
        <dbReference type="ChEBI" id="CHEBI:456216"/>
    </ligand>
</feature>
<feature type="binding site" evidence="1">
    <location>
        <position position="312"/>
    </location>
    <ligand>
        <name>ATP</name>
        <dbReference type="ChEBI" id="CHEBI:30616"/>
    </ligand>
</feature>
<feature type="binding site" evidence="1">
    <location>
        <position position="316"/>
    </location>
    <ligand>
        <name>ATP</name>
        <dbReference type="ChEBI" id="CHEBI:30616"/>
    </ligand>
</feature>
<feature type="binding site" evidence="1">
    <location>
        <position position="413"/>
    </location>
    <ligand>
        <name>ADP</name>
        <dbReference type="ChEBI" id="CHEBI:456216"/>
    </ligand>
</feature>
<feature type="binding site" evidence="1">
    <location>
        <position position="413"/>
    </location>
    <ligand>
        <name>ATP</name>
        <dbReference type="ChEBI" id="CHEBI:30616"/>
    </ligand>
</feature>
<feature type="binding site" evidence="1">
    <location>
        <position position="417"/>
    </location>
    <ligand>
        <name>ADP</name>
        <dbReference type="ChEBI" id="CHEBI:456216"/>
    </ligand>
</feature>
<sequence length="504" mass="54633">MSQYVIAIDQGTTSSRAIIFDHDGNIVSTGQLEHEQIFPKAGWVEHNATEIWNNTREVIGTALSKANLTRHDIAAVGITNQRETAVVWDKTTGEPVYNAIVWQDTRTQSIVDELAVGGGVERFKDKVGLPLATYFSGTKIKWILDNVDGARERAAAGDLLFGNTDSWVTWNLTGGVDGGVHITDVTNASRTMFMDLATLSWDQEILDAFGVPASMLPTIKSSSEVYGTVHTSQLLREVPVAGILGDQQAATFGQAAFNTGEAKNTYGTGCFLIFNTGEEIVHSKNGLLTTVGYKLGDAPTHYALEGSIAVAGSLIQWLRDTLGMISSAPEVEELAASVEDNGGVYIVPAFSGLFAPYWRSDARGAIVGMTRYVNRNHIARAALEATAFQTREVLDAVNADSGVPLTELKVDGGMVANDALMQFQADILGVPVIRPKVTETTALGAAYAAGLAVGFWNDLGELSSNWAEDKRWEPAMEEDERARQLRLWKKAVTKSMDWVDEDVR</sequence>
<protein>
    <recommendedName>
        <fullName evidence="1">Glycerol kinase</fullName>
        <ecNumber evidence="1">2.7.1.30</ecNumber>
    </recommendedName>
    <alternativeName>
        <fullName evidence="1">ATP:glycerol 3-phosphotransferase</fullName>
    </alternativeName>
    <alternativeName>
        <fullName evidence="1">Glycerokinase</fullName>
        <shortName evidence="1">GK</shortName>
    </alternativeName>
</protein>
<keyword id="KW-0067">ATP-binding</keyword>
<keyword id="KW-0319">Glycerol metabolism</keyword>
<keyword id="KW-0418">Kinase</keyword>
<keyword id="KW-0547">Nucleotide-binding</keyword>
<keyword id="KW-1185">Reference proteome</keyword>
<keyword id="KW-0808">Transferase</keyword>
<evidence type="ECO:0000255" key="1">
    <source>
        <dbReference type="HAMAP-Rule" id="MF_00186"/>
    </source>
</evidence>
<reference key="1">
    <citation type="journal article" date="2008" name="J. Bacteriol.">
        <title>Genome sequence of the fish pathogen Renibacterium salmoninarum suggests reductive evolution away from an environmental Arthrobacter ancestor.</title>
        <authorList>
            <person name="Wiens G.D."/>
            <person name="Rockey D.D."/>
            <person name="Wu Z."/>
            <person name="Chang J."/>
            <person name="Levy R."/>
            <person name="Crane S."/>
            <person name="Chen D.S."/>
            <person name="Capri G.R."/>
            <person name="Burnett J.R."/>
            <person name="Sudheesh P.S."/>
            <person name="Schipma M.J."/>
            <person name="Burd H."/>
            <person name="Bhattacharyya A."/>
            <person name="Rhodes L.D."/>
            <person name="Kaul R."/>
            <person name="Strom M.S."/>
        </authorList>
    </citation>
    <scope>NUCLEOTIDE SEQUENCE [LARGE SCALE GENOMIC DNA]</scope>
    <source>
        <strain>ATCC 33209 / DSM 20767 / JCM 11484 / NBRC 15589 / NCIMB 2235</strain>
    </source>
</reference>
<accession>A9WS93</accession>
<organism>
    <name type="scientific">Renibacterium salmoninarum (strain ATCC 33209 / DSM 20767 / JCM 11484 / NBRC 15589 / NCIMB 2235)</name>
    <dbReference type="NCBI Taxonomy" id="288705"/>
    <lineage>
        <taxon>Bacteria</taxon>
        <taxon>Bacillati</taxon>
        <taxon>Actinomycetota</taxon>
        <taxon>Actinomycetes</taxon>
        <taxon>Micrococcales</taxon>
        <taxon>Micrococcaceae</taxon>
        <taxon>Renibacterium</taxon>
    </lineage>
</organism>